<sequence length="127" mass="13854">MSLQSNSVKPTEIPLSEIRRPLAPVLDPQKIDAMVATMKGIPTASKTCSLEQAEAAASAGELPPVDVLGVRVKGQTLYYAFGGCHRLQAYDRRARETQNAAFPVRCRVLPATPRQIRMYLGSSLDIE</sequence>
<comment type="function">
    <text evidence="3">Contributes to oxidative stress resistance by reducing cysteine-sulfinic acid formed under exposure to oxidants in the peroxiredoxin TSA1. May catalyze the reduction in a multi-step process by acting both as a specific phosphotransferase and as thioltransferase.</text>
</comment>
<comment type="catalytic activity">
    <reaction evidence="3">
        <text>S-hydroxy-S-oxy-L-cysteinyl-[peroxiredoxin] + [protein]-dithiol + ATP = S-hydroxy-L-cysteinyl-[peroxiredoxin] + [protein]-disulfide + ADP + phosphate</text>
        <dbReference type="Rhea" id="RHEA:17545"/>
        <dbReference type="Rhea" id="RHEA-COMP:10593"/>
        <dbReference type="Rhea" id="RHEA-COMP:10594"/>
        <dbReference type="Rhea" id="RHEA-COMP:13681"/>
        <dbReference type="Rhea" id="RHEA-COMP:17976"/>
        <dbReference type="ChEBI" id="CHEBI:29950"/>
        <dbReference type="ChEBI" id="CHEBI:30616"/>
        <dbReference type="ChEBI" id="CHEBI:43474"/>
        <dbReference type="ChEBI" id="CHEBI:50058"/>
        <dbReference type="ChEBI" id="CHEBI:61973"/>
        <dbReference type="ChEBI" id="CHEBI:61974"/>
        <dbReference type="ChEBI" id="CHEBI:456216"/>
        <dbReference type="EC" id="1.8.98.2"/>
    </reaction>
</comment>
<comment type="cofactor">
    <cofactor evidence="3">
        <name>Mg(2+)</name>
        <dbReference type="ChEBI" id="CHEBI:18420"/>
    </cofactor>
</comment>
<comment type="subcellular location">
    <subcellularLocation>
        <location evidence="1">Cytoplasm</location>
    </subcellularLocation>
    <subcellularLocation>
        <location evidence="1">Nucleus</location>
    </subcellularLocation>
</comment>
<comment type="induction">
    <text evidence="3">By hydrogen peroxide.</text>
</comment>
<comment type="PTM">
    <text evidence="3">Forms a transient disulfide bond with TSA1 during the reduction of cysteine sulfinic acid (-SO2H).</text>
</comment>
<comment type="miscellaneous">
    <text evidence="2">Present with 538 molecules/cell in log phase SD medium.</text>
</comment>
<comment type="similarity">
    <text evidence="5">Belongs to the sulfiredoxin family.</text>
</comment>
<accession>P36077</accession>
<accession>D6VXK2</accession>
<keyword id="KW-0049">Antioxidant</keyword>
<keyword id="KW-0067">ATP-binding</keyword>
<keyword id="KW-0963">Cytoplasm</keyword>
<keyword id="KW-1015">Disulfide bond</keyword>
<keyword id="KW-0460">Magnesium</keyword>
<keyword id="KW-0547">Nucleotide-binding</keyword>
<keyword id="KW-0539">Nucleus</keyword>
<keyword id="KW-0560">Oxidoreductase</keyword>
<keyword id="KW-1185">Reference proteome</keyword>
<evidence type="ECO:0000269" key="1">
    <source>
    </source>
</evidence>
<evidence type="ECO:0000269" key="2">
    <source>
    </source>
</evidence>
<evidence type="ECO:0000269" key="3">
    <source>
    </source>
</evidence>
<evidence type="ECO:0000303" key="4">
    <source>
    </source>
</evidence>
<evidence type="ECO:0000305" key="5"/>
<feature type="chain" id="PRO_0000211435" description="Sulfiredoxin">
    <location>
        <begin position="1"/>
        <end position="127"/>
    </location>
</feature>
<feature type="disulfide bond" description="Interchain (with C-48 in TSA1); transient" evidence="3">
    <location>
        <position position="84"/>
    </location>
</feature>
<feature type="mutagenesis site" description="Minor effect on formation of disulfide bond with TSA1 and reduction of cysteine-sulfinic acid." evidence="3">
    <original>C</original>
    <variation>S</variation>
    <location>
        <position position="48"/>
    </location>
</feature>
<feature type="mutagenesis site" description="Abolishes formation of disulfide bond with TSA1 and reduction of cysteine-sulfinic acid." evidence="3">
    <original>C</original>
    <variation>S</variation>
    <location>
        <position position="84"/>
    </location>
</feature>
<feature type="mutagenesis site" description="No effect on formation of disulfide bond with TSA1 and reduction of cysteine-sulfinic acid." evidence="3">
    <original>C</original>
    <variation>S</variation>
    <location>
        <position position="106"/>
    </location>
</feature>
<organism>
    <name type="scientific">Saccharomyces cerevisiae (strain ATCC 204508 / S288c)</name>
    <name type="common">Baker's yeast</name>
    <dbReference type="NCBI Taxonomy" id="559292"/>
    <lineage>
        <taxon>Eukaryota</taxon>
        <taxon>Fungi</taxon>
        <taxon>Dikarya</taxon>
        <taxon>Ascomycota</taxon>
        <taxon>Saccharomycotina</taxon>
        <taxon>Saccharomycetes</taxon>
        <taxon>Saccharomycetales</taxon>
        <taxon>Saccharomycetaceae</taxon>
        <taxon>Saccharomyces</taxon>
    </lineage>
</organism>
<reference key="1">
    <citation type="journal article" date="1994" name="Nature">
        <title>Complete DNA sequence of yeast chromosome XI.</title>
        <authorList>
            <person name="Dujon B."/>
            <person name="Alexandraki D."/>
            <person name="Andre B."/>
            <person name="Ansorge W."/>
            <person name="Baladron V."/>
            <person name="Ballesta J.P.G."/>
            <person name="Banrevi A."/>
            <person name="Bolle P.-A."/>
            <person name="Bolotin-Fukuhara M."/>
            <person name="Bossier P."/>
            <person name="Bou G."/>
            <person name="Boyer J."/>
            <person name="Buitrago M.J."/>
            <person name="Cheret G."/>
            <person name="Colleaux L."/>
            <person name="Daignan-Fornier B."/>
            <person name="del Rey F."/>
            <person name="Dion C."/>
            <person name="Domdey H."/>
            <person name="Duesterhoeft A."/>
            <person name="Duesterhus S."/>
            <person name="Entian K.-D."/>
            <person name="Erfle H."/>
            <person name="Esteban P.F."/>
            <person name="Feldmann H."/>
            <person name="Fernandes L."/>
            <person name="Fobo G.M."/>
            <person name="Fritz C."/>
            <person name="Fukuhara H."/>
            <person name="Gabel C."/>
            <person name="Gaillon L."/>
            <person name="Garcia-Cantalejo J.M."/>
            <person name="Garcia-Ramirez J.J."/>
            <person name="Gent M.E."/>
            <person name="Ghazvini M."/>
            <person name="Goffeau A."/>
            <person name="Gonzalez A."/>
            <person name="Grothues D."/>
            <person name="Guerreiro P."/>
            <person name="Hegemann J.H."/>
            <person name="Hewitt N."/>
            <person name="Hilger F."/>
            <person name="Hollenberg C.P."/>
            <person name="Horaitis O."/>
            <person name="Indge K.J."/>
            <person name="Jacquier A."/>
            <person name="James C.M."/>
            <person name="Jauniaux J.-C."/>
            <person name="Jimenez A."/>
            <person name="Keuchel H."/>
            <person name="Kirchrath L."/>
            <person name="Kleine K."/>
            <person name="Koetter P."/>
            <person name="Legrain P."/>
            <person name="Liebl S."/>
            <person name="Louis E.J."/>
            <person name="Maia e Silva A."/>
            <person name="Marck C."/>
            <person name="Monnier A.-L."/>
            <person name="Moestl D."/>
            <person name="Mueller S."/>
            <person name="Obermaier B."/>
            <person name="Oliver S.G."/>
            <person name="Pallier C."/>
            <person name="Pascolo S."/>
            <person name="Pfeiffer F."/>
            <person name="Philippsen P."/>
            <person name="Planta R.J."/>
            <person name="Pohl F.M."/>
            <person name="Pohl T.M."/>
            <person name="Poehlmann R."/>
            <person name="Portetelle D."/>
            <person name="Purnelle B."/>
            <person name="Puzos V."/>
            <person name="Ramezani Rad M."/>
            <person name="Rasmussen S.W."/>
            <person name="Remacha M.A."/>
            <person name="Revuelta J.L."/>
            <person name="Richard G.-F."/>
            <person name="Rieger M."/>
            <person name="Rodrigues-Pousada C."/>
            <person name="Rose M."/>
            <person name="Rupp T."/>
            <person name="Santos M.A."/>
            <person name="Schwager C."/>
            <person name="Sensen C."/>
            <person name="Skala J."/>
            <person name="Soares H."/>
            <person name="Sor F."/>
            <person name="Stegemann J."/>
            <person name="Tettelin H."/>
            <person name="Thierry A."/>
            <person name="Tzermia M."/>
            <person name="Urrestarazu L.A."/>
            <person name="van Dyck L."/>
            <person name="van Vliet-Reedijk J.C."/>
            <person name="Valens M."/>
            <person name="Vandenbol M."/>
            <person name="Vilela C."/>
            <person name="Vissers S."/>
            <person name="von Wettstein D."/>
            <person name="Voss H."/>
            <person name="Wiemann S."/>
            <person name="Xu G."/>
            <person name="Zimmermann J."/>
            <person name="Haasemann M."/>
            <person name="Becker I."/>
            <person name="Mewes H.-W."/>
        </authorList>
    </citation>
    <scope>NUCLEOTIDE SEQUENCE [LARGE SCALE GENOMIC DNA]</scope>
    <source>
        <strain>ATCC 204508 / S288c</strain>
    </source>
</reference>
<reference key="2">
    <citation type="journal article" date="2014" name="G3 (Bethesda)">
        <title>The reference genome sequence of Saccharomyces cerevisiae: Then and now.</title>
        <authorList>
            <person name="Engel S.R."/>
            <person name="Dietrich F.S."/>
            <person name="Fisk D.G."/>
            <person name="Binkley G."/>
            <person name="Balakrishnan R."/>
            <person name="Costanzo M.C."/>
            <person name="Dwight S.S."/>
            <person name="Hitz B.C."/>
            <person name="Karra K."/>
            <person name="Nash R.S."/>
            <person name="Weng S."/>
            <person name="Wong E.D."/>
            <person name="Lloyd P."/>
            <person name="Skrzypek M.S."/>
            <person name="Miyasato S.R."/>
            <person name="Simison M."/>
            <person name="Cherry J.M."/>
        </authorList>
    </citation>
    <scope>GENOME REANNOTATION</scope>
    <source>
        <strain>ATCC 204508 / S288c</strain>
    </source>
</reference>
<reference key="3">
    <citation type="journal article" date="2007" name="Genome Res.">
        <title>Approaching a complete repository of sequence-verified protein-encoding clones for Saccharomyces cerevisiae.</title>
        <authorList>
            <person name="Hu Y."/>
            <person name="Rolfs A."/>
            <person name="Bhullar B."/>
            <person name="Murthy T.V.S."/>
            <person name="Zhu C."/>
            <person name="Berger M.F."/>
            <person name="Camargo A.A."/>
            <person name="Kelley F."/>
            <person name="McCarron S."/>
            <person name="Jepson D."/>
            <person name="Richardson A."/>
            <person name="Raphael J."/>
            <person name="Moreira D."/>
            <person name="Taycher E."/>
            <person name="Zuo D."/>
            <person name="Mohr S."/>
            <person name="Kane M.F."/>
            <person name="Williamson J."/>
            <person name="Simpson A.J.G."/>
            <person name="Bulyk M.L."/>
            <person name="Harlow E."/>
            <person name="Marsischky G."/>
            <person name="Kolodner R.D."/>
            <person name="LaBaer J."/>
        </authorList>
    </citation>
    <scope>NUCLEOTIDE SEQUENCE [GENOMIC DNA]</scope>
    <source>
        <strain>ATCC 204508 / S288c</strain>
    </source>
</reference>
<reference key="4">
    <citation type="journal article" date="2003" name="Nature">
        <title>Global analysis of protein localization in budding yeast.</title>
        <authorList>
            <person name="Huh W.-K."/>
            <person name="Falvo J.V."/>
            <person name="Gerke L.C."/>
            <person name="Carroll A.S."/>
            <person name="Howson R.W."/>
            <person name="Weissman J.S."/>
            <person name="O'Shea E.K."/>
        </authorList>
    </citation>
    <scope>SUBCELLULAR LOCATION [LARGE SCALE ANALYSIS]</scope>
</reference>
<reference key="5">
    <citation type="journal article" date="2003" name="Nature">
        <title>Global analysis of protein expression in yeast.</title>
        <authorList>
            <person name="Ghaemmaghami S."/>
            <person name="Huh W.-K."/>
            <person name="Bower K."/>
            <person name="Howson R.W."/>
            <person name="Belle A."/>
            <person name="Dephoure N."/>
            <person name="O'Shea E.K."/>
            <person name="Weissman J.S."/>
        </authorList>
    </citation>
    <scope>LEVEL OF PROTEIN EXPRESSION [LARGE SCALE ANALYSIS]</scope>
</reference>
<reference key="6">
    <citation type="journal article" date="2003" name="Nature">
        <title>ATP-dependent reduction of cysteine-sulphinic acid by S. cerevisiae sulphiredoxin.</title>
        <authorList>
            <person name="Biteau B."/>
            <person name="Labarre J."/>
            <person name="Toledano M.B."/>
        </authorList>
    </citation>
    <scope>FUNCTION</scope>
    <scope>CATALYTIC ACTIVITY</scope>
    <scope>COFACTOR</scope>
    <scope>INDUCTION</scope>
    <scope>DISULFIDE BOND WITH TSA1</scope>
    <scope>MUTAGENESIS OF CYS-48; CYS-84 AND CYS-106</scope>
</reference>
<protein>
    <recommendedName>
        <fullName evidence="4">Sulfiredoxin</fullName>
        <ecNumber>1.8.98.2</ecNumber>
    </recommendedName>
    <alternativeName>
        <fullName evidence="4">Sulphiredoxin</fullName>
    </alternativeName>
</protein>
<dbReference type="EC" id="1.8.98.2"/>
<dbReference type="EMBL" id="Z28086">
    <property type="protein sequence ID" value="CAA81924.1"/>
    <property type="molecule type" value="Genomic_DNA"/>
</dbReference>
<dbReference type="EMBL" id="AY558350">
    <property type="protein sequence ID" value="AAS56676.1"/>
    <property type="molecule type" value="Genomic_DNA"/>
</dbReference>
<dbReference type="EMBL" id="BK006944">
    <property type="protein sequence ID" value="DAA09072.1"/>
    <property type="molecule type" value="Genomic_DNA"/>
</dbReference>
<dbReference type="PIR" id="S37911">
    <property type="entry name" value="S37911"/>
</dbReference>
<dbReference type="RefSeq" id="NP_012837.1">
    <property type="nucleotide sequence ID" value="NM_001179652.1"/>
</dbReference>
<dbReference type="BMRB" id="P36077"/>
<dbReference type="SMR" id="P36077"/>
<dbReference type="BioGRID" id="34047">
    <property type="interactions" value="55"/>
</dbReference>
<dbReference type="DIP" id="DIP-4344N"/>
<dbReference type="FunCoup" id="P36077">
    <property type="interactions" value="483"/>
</dbReference>
<dbReference type="IntAct" id="P36077">
    <property type="interactions" value="5"/>
</dbReference>
<dbReference type="STRING" id="4932.YKL086W"/>
<dbReference type="CarbonylDB" id="P36077"/>
<dbReference type="iPTMnet" id="P36077"/>
<dbReference type="PaxDb" id="4932-YKL086W"/>
<dbReference type="PeptideAtlas" id="P36077"/>
<dbReference type="EnsemblFungi" id="YKL086W_mRNA">
    <property type="protein sequence ID" value="YKL086W"/>
    <property type="gene ID" value="YKL086W"/>
</dbReference>
<dbReference type="GeneID" id="853776"/>
<dbReference type="KEGG" id="sce:YKL086W"/>
<dbReference type="AGR" id="SGD:S000001569"/>
<dbReference type="SGD" id="S000001569">
    <property type="gene designation" value="SRX1"/>
</dbReference>
<dbReference type="VEuPathDB" id="FungiDB:YKL086W"/>
<dbReference type="eggNOG" id="KOG3388">
    <property type="taxonomic scope" value="Eukaryota"/>
</dbReference>
<dbReference type="GeneTree" id="ENSGT00390000007832"/>
<dbReference type="HOGENOM" id="CLU_124532_1_1_1"/>
<dbReference type="InParanoid" id="P36077"/>
<dbReference type="OMA" id="SQIRRPI"/>
<dbReference type="OrthoDB" id="10023328at2759"/>
<dbReference type="BioCyc" id="YEAST:G3O-31879-MONOMER"/>
<dbReference type="Reactome" id="R-SCE-9818027">
    <property type="pathway name" value="NFE2L2 regulating anti-oxidant/detoxification enzymes"/>
</dbReference>
<dbReference type="BioGRID-ORCS" id="853776">
    <property type="hits" value="4 hits in 10 CRISPR screens"/>
</dbReference>
<dbReference type="PRO" id="PR:P36077"/>
<dbReference type="Proteomes" id="UP000002311">
    <property type="component" value="Chromosome XI"/>
</dbReference>
<dbReference type="RNAct" id="P36077">
    <property type="molecule type" value="protein"/>
</dbReference>
<dbReference type="GO" id="GO:0005737">
    <property type="term" value="C:cytoplasm"/>
    <property type="evidence" value="ECO:0007005"/>
    <property type="project" value="SGD"/>
</dbReference>
<dbReference type="GO" id="GO:0005634">
    <property type="term" value="C:nucleus"/>
    <property type="evidence" value="ECO:0007005"/>
    <property type="project" value="SGD"/>
</dbReference>
<dbReference type="GO" id="GO:0005524">
    <property type="term" value="F:ATP binding"/>
    <property type="evidence" value="ECO:0007669"/>
    <property type="project" value="UniProtKB-KW"/>
</dbReference>
<dbReference type="GO" id="GO:0032542">
    <property type="term" value="F:sulfiredoxin activity"/>
    <property type="evidence" value="ECO:0000314"/>
    <property type="project" value="SGD"/>
</dbReference>
<dbReference type="GO" id="GO:0034599">
    <property type="term" value="P:cellular response to oxidative stress"/>
    <property type="evidence" value="ECO:0000315"/>
    <property type="project" value="SGD"/>
</dbReference>
<dbReference type="GO" id="GO:0032272">
    <property type="term" value="P:negative regulation of protein polymerization"/>
    <property type="evidence" value="ECO:0000315"/>
    <property type="project" value="CAFA"/>
</dbReference>
<dbReference type="CDD" id="cd16395">
    <property type="entry name" value="Srx"/>
    <property type="match status" value="1"/>
</dbReference>
<dbReference type="FunFam" id="3.90.1530.10:FF:000005">
    <property type="entry name" value="Sulfiredoxin"/>
    <property type="match status" value="1"/>
</dbReference>
<dbReference type="Gene3D" id="3.90.1530.10">
    <property type="entry name" value="Conserved hypothetical protein from pyrococcus furiosus pfu- 392566-001, ParB domain"/>
    <property type="match status" value="1"/>
</dbReference>
<dbReference type="InterPro" id="IPR003115">
    <property type="entry name" value="ParB/Sulfiredoxin_dom"/>
</dbReference>
<dbReference type="InterPro" id="IPR036086">
    <property type="entry name" value="ParB/Sulfiredoxin_sf"/>
</dbReference>
<dbReference type="InterPro" id="IPR016692">
    <property type="entry name" value="Sulfiredoxin"/>
</dbReference>
<dbReference type="PANTHER" id="PTHR21348">
    <property type="match status" value="1"/>
</dbReference>
<dbReference type="PANTHER" id="PTHR21348:SF2">
    <property type="entry name" value="SULFIREDOXIN-1"/>
    <property type="match status" value="1"/>
</dbReference>
<dbReference type="Pfam" id="PF02195">
    <property type="entry name" value="ParBc"/>
    <property type="match status" value="1"/>
</dbReference>
<dbReference type="PIRSF" id="PIRSF017267">
    <property type="entry name" value="Sulfiredoxin"/>
    <property type="match status" value="1"/>
</dbReference>
<dbReference type="SMART" id="SM00470">
    <property type="entry name" value="ParB"/>
    <property type="match status" value="1"/>
</dbReference>
<dbReference type="SUPFAM" id="SSF110849">
    <property type="entry name" value="ParB/Sulfiredoxin"/>
    <property type="match status" value="1"/>
</dbReference>
<proteinExistence type="evidence at protein level"/>
<gene>
    <name evidence="4" type="primary">SRX1</name>
    <name type="ordered locus">YKL086W</name>
</gene>
<name>SRX1_YEAST</name>